<gene>
    <name evidence="7" type="primary">swnN</name>
    <name type="ORF">ARB_07841</name>
</gene>
<feature type="chain" id="PRO_0000441189" description="Oxidoreductase swnN">
    <location>
        <begin position="1"/>
        <end position="318"/>
    </location>
</feature>
<accession>D4AU28</accession>
<reference key="1">
    <citation type="journal article" date="2011" name="Genome Biol.">
        <title>Comparative and functional genomics provide insights into the pathogenicity of dermatophytic fungi.</title>
        <authorList>
            <person name="Burmester A."/>
            <person name="Shelest E."/>
            <person name="Gloeckner G."/>
            <person name="Heddergott C."/>
            <person name="Schindler S."/>
            <person name="Staib P."/>
            <person name="Heidel A."/>
            <person name="Felder M."/>
            <person name="Petzold A."/>
            <person name="Szafranski K."/>
            <person name="Feuermann M."/>
            <person name="Pedruzzi I."/>
            <person name="Priebe S."/>
            <person name="Groth M."/>
            <person name="Winkler R."/>
            <person name="Li W."/>
            <person name="Kniemeyer O."/>
            <person name="Schroeckh V."/>
            <person name="Hertweck C."/>
            <person name="Hube B."/>
            <person name="White T.C."/>
            <person name="Platzer M."/>
            <person name="Guthke R."/>
            <person name="Heitman J."/>
            <person name="Woestemeyer J."/>
            <person name="Zipfel P.F."/>
            <person name="Monod M."/>
            <person name="Brakhage A.A."/>
        </authorList>
    </citation>
    <scope>NUCLEOTIDE SEQUENCE [LARGE SCALE GENOMIC DNA]</scope>
    <source>
        <strain>ATCC MYA-4681 / CBS 112371</strain>
    </source>
</reference>
<reference key="2">
    <citation type="journal article" date="2017" name="G3 (Bethesda)">
        <title>Swainsonine biosynthesis genes in diverse symbiotic and pathogenic fungi.</title>
        <authorList>
            <person name="Cook D."/>
            <person name="Donzelli B.G."/>
            <person name="Creamer R."/>
            <person name="Baucom D.L."/>
            <person name="Gardner D.R."/>
            <person name="Pan J."/>
            <person name="Moore N."/>
            <person name="Jaromczyk J.W."/>
            <person name="Schardl C.L."/>
        </authorList>
    </citation>
    <scope>IDENTIFICATION</scope>
    <scope>PATHWAY</scope>
</reference>
<name>SWNN_ARTBC</name>
<evidence type="ECO:0000250" key="1">
    <source>
        <dbReference type="UniProtKB" id="E9F8L8"/>
    </source>
</evidence>
<evidence type="ECO:0000250" key="2">
    <source>
        <dbReference type="UniProtKB" id="E9F8L9"/>
    </source>
</evidence>
<evidence type="ECO:0000250" key="3">
    <source>
        <dbReference type="UniProtKB" id="E9F8M1"/>
    </source>
</evidence>
<evidence type="ECO:0000250" key="4">
    <source>
        <dbReference type="UniProtKB" id="E9F8M3"/>
    </source>
</evidence>
<evidence type="ECO:0000250" key="5">
    <source>
        <dbReference type="UniProtKB" id="E9F8M4"/>
    </source>
</evidence>
<evidence type="ECO:0000269" key="6">
    <source>
    </source>
</evidence>
<evidence type="ECO:0000303" key="7">
    <source>
    </source>
</evidence>
<evidence type="ECO:0000305" key="8"/>
<evidence type="ECO:0000305" key="9">
    <source>
    </source>
</evidence>
<sequence>MAVVAVAGGTGGKGVPGAANEPRRYAVDYDNVEEMRNVLKENNVEVVVSALLLSDESVAKSQINLIRAAAESGTVTKFIPSEYYIDFHSPIPGSDLFTNFQIEAEEELMRHPQLTWTLIRVGIFLDHLTMPFNPKPTYITPYWVFVDIEHEECVFPGDGSQPLVLSHSTDLAAYIECLVGLPSNEWPRESLVASNKIQVKDLQDLIKKTTGTLCGHLGICIRTFLILAIGREFKVTYDSVESIQKGQITPLTSNRPVFDDPQKGKLFQEVEVQVMLSMLSNAHDLPGKNLAELFPEVHVTNIEDFLRAGWEMKQGLKP</sequence>
<comment type="function">
    <text evidence="1 2 3 4 5 6">Aminotransferase; part of the gene cluster that mediates the biosynthesis of swainsonine (SW), a cytotoxic fungal alkaloid and a potential cancer therapy drug (PubMed:28381497). Swainsonine production occurs via a multibranched pathway and is dispensable for fungal colonization of plants and infection of insect hosts (By similarity). The first step of swainsonine biosynthesis is the production of the precursor pipecolic acid (PA) via conversion of L-lysine (Lys) to 1-piperideine-6-carboxylate (P6C) by the aminotransferase swnA, the latter being further reduced to PA by the reductase swnR (By similarity). The PKS-NRPS hybrid synthetase swnK uptakes and condensates PA and malonyl-CoA with and without skipping of the ketoreductase (KR) domain in order to produce 3 intermediates, 1-oxoindolizidine, (1S)-1-hydroxyindolizin, and (1R)-1-hydroxyindolizine; with the transisomer (1S)-1-hydroxyindolizin being predominant (By similarity). The terminal thioester reductase (TE) domain of swnK is involved in reduction of the thioester bond to release the intermediate aldehydes (By similarity). The oxidoreductase swnN could contribute to the reduction of 1-oxoindolizidine to (1S)-1-hydroxyindolizin and (1R)-1-hydroxyindolizine, contributing to the major route of SW production (By similarity). The dioxygenase swnH2 would be responsible for the oxidization of (1R)-1-hydroxyindolizine into (1R,2S)-1,2-dihydroxyindolizine and of (1S)-1-hydroxyindolizin to yield both (1R,2S)-1,2-dihydroxyindolizine and (1S,2S)-1,2-dihydroxyindolizine (By similarity). The dioxygenase swnH1 then performs the conversion of the 1,2-dihydroxyindolizine epimers to SW (By similarity).</text>
</comment>
<comment type="pathway">
    <text evidence="9">Mycotoxin biosynthesis.</text>
</comment>
<comment type="similarity">
    <text evidence="8">Belongs to the NmrA-type oxidoreductase family. Isoflavone reductase subfamily.</text>
</comment>
<protein>
    <recommendedName>
        <fullName evidence="7">Oxidoreductase swnN</fullName>
        <ecNumber evidence="9">1.3.1.-</ecNumber>
    </recommendedName>
    <alternativeName>
        <fullName evidence="7">Swainsonine biosynthesis gene cluster protein N</fullName>
    </alternativeName>
</protein>
<proteinExistence type="inferred from homology"/>
<dbReference type="EC" id="1.3.1.-" evidence="9"/>
<dbReference type="EMBL" id="ABSU01000010">
    <property type="protein sequence ID" value="EFE33481.1"/>
    <property type="molecule type" value="Genomic_DNA"/>
</dbReference>
<dbReference type="RefSeq" id="XP_003014121.1">
    <property type="nucleotide sequence ID" value="XM_003014075.1"/>
</dbReference>
<dbReference type="SMR" id="D4AU28"/>
<dbReference type="GeneID" id="9521538"/>
<dbReference type="KEGG" id="abe:ARB_07841"/>
<dbReference type="eggNOG" id="ENOG502SIXU">
    <property type="taxonomic scope" value="Eukaryota"/>
</dbReference>
<dbReference type="HOGENOM" id="CLU_044876_0_0_1"/>
<dbReference type="OMA" id="EYYIDFH"/>
<dbReference type="Proteomes" id="UP000008866">
    <property type="component" value="Unassembled WGS sequence"/>
</dbReference>
<dbReference type="GO" id="GO:0016491">
    <property type="term" value="F:oxidoreductase activity"/>
    <property type="evidence" value="ECO:0007669"/>
    <property type="project" value="UniProtKB-KW"/>
</dbReference>
<dbReference type="Gene3D" id="3.40.50.720">
    <property type="entry name" value="NAD(P)-binding Rossmann-like Domain"/>
    <property type="match status" value="1"/>
</dbReference>
<dbReference type="Gene3D" id="3.90.25.10">
    <property type="entry name" value="UDP-galactose 4-epimerase, domain 1"/>
    <property type="match status" value="1"/>
</dbReference>
<dbReference type="InterPro" id="IPR036291">
    <property type="entry name" value="NAD(P)-bd_dom_sf"/>
</dbReference>
<dbReference type="InterPro" id="IPR051609">
    <property type="entry name" value="NmrA/Isoflavone_reductase-like"/>
</dbReference>
<dbReference type="PANTHER" id="PTHR47706:SF4">
    <property type="entry name" value="NMRA-LIKE DOMAIN-CONTAINING PROTEIN"/>
    <property type="match status" value="1"/>
</dbReference>
<dbReference type="PANTHER" id="PTHR47706">
    <property type="entry name" value="NMRA-LIKE FAMILY PROTEIN"/>
    <property type="match status" value="1"/>
</dbReference>
<dbReference type="SUPFAM" id="SSF51735">
    <property type="entry name" value="NAD(P)-binding Rossmann-fold domains"/>
    <property type="match status" value="1"/>
</dbReference>
<organism>
    <name type="scientific">Arthroderma benhamiae (strain ATCC MYA-4681 / CBS 112371)</name>
    <name type="common">Trichophyton mentagrophytes</name>
    <dbReference type="NCBI Taxonomy" id="663331"/>
    <lineage>
        <taxon>Eukaryota</taxon>
        <taxon>Fungi</taxon>
        <taxon>Dikarya</taxon>
        <taxon>Ascomycota</taxon>
        <taxon>Pezizomycotina</taxon>
        <taxon>Eurotiomycetes</taxon>
        <taxon>Eurotiomycetidae</taxon>
        <taxon>Onygenales</taxon>
        <taxon>Arthrodermataceae</taxon>
        <taxon>Trichophyton</taxon>
    </lineage>
</organism>
<keyword id="KW-0521">NADP</keyword>
<keyword id="KW-0560">Oxidoreductase</keyword>
<keyword id="KW-1185">Reference proteome</keyword>